<evidence type="ECO:0000250" key="1"/>
<evidence type="ECO:0000255" key="2"/>
<evidence type="ECO:0000269" key="3">
    <source>
    </source>
</evidence>
<evidence type="ECO:0000305" key="4"/>
<accession>Q8NHW6</accession>
<accession>Q53SW6</accession>
<keyword id="KW-1185">Reference proteome</keyword>
<keyword id="KW-0964">Secreted</keyword>
<keyword id="KW-0732">Signal</keyword>
<feature type="signal peptide" evidence="2">
    <location>
        <begin position="1"/>
        <end position="21"/>
    </location>
</feature>
<feature type="chain" id="PRO_0000021976" description="Otospiralin">
    <location>
        <begin position="22"/>
        <end position="89"/>
    </location>
</feature>
<feature type="sequence variant" id="VAR_020601" description="In dbSNP:rs35889242." evidence="3">
    <original>P</original>
    <variation>L</variation>
    <location>
        <position position="7"/>
    </location>
</feature>
<comment type="function">
    <text evidence="1">May be essential for the survival of the neurosensory epithelium of the inner ear.</text>
</comment>
<comment type="interaction">
    <interactant intactId="EBI-12038159">
        <id>Q8NHW6</id>
    </interactant>
    <interactant intactId="EBI-11977221">
        <id>Q86Z20</id>
        <label>CCDC125</label>
    </interactant>
    <organismsDiffer>false</organismsDiffer>
    <experiments>3</experiments>
</comment>
<comment type="interaction">
    <interactant intactId="EBI-12038159">
        <id>Q8NHW6</id>
    </interactant>
    <interactant intactId="EBI-3867333">
        <id>A8MQ03</id>
        <label>CYSRT1</label>
    </interactant>
    <organismsDiffer>false</organismsDiffer>
    <experiments>3</experiments>
</comment>
<comment type="interaction">
    <interactant intactId="EBI-12038159">
        <id>Q8NHW6</id>
    </interactant>
    <interactant intactId="EBI-2107455">
        <id>Q08AM6</id>
        <label>VAC14</label>
    </interactant>
    <organismsDiffer>false</organismsDiffer>
    <experiments>3</experiments>
</comment>
<comment type="subcellular location">
    <subcellularLocation>
        <location evidence="4">Secreted</location>
    </subcellularLocation>
</comment>
<comment type="tissue specificity">
    <text>Ear specific.</text>
</comment>
<comment type="similarity">
    <text evidence="4">Belongs to the otospiralin family.</text>
</comment>
<gene>
    <name type="primary">OTOS</name>
    <name type="synonym">OTOSP</name>
</gene>
<dbReference type="EMBL" id="AY062256">
    <property type="protein sequence ID" value="AAL47489.1"/>
    <property type="molecule type" value="Genomic_DNA"/>
</dbReference>
<dbReference type="EMBL" id="AC013469">
    <property type="protein sequence ID" value="AAY14739.1"/>
    <property type="molecule type" value="Genomic_DNA"/>
</dbReference>
<dbReference type="EMBL" id="BC105085">
    <property type="protein sequence ID" value="AAI05086.1"/>
    <property type="molecule type" value="mRNA"/>
</dbReference>
<dbReference type="EMBL" id="BC105087">
    <property type="protein sequence ID" value="AAI05088.1"/>
    <property type="molecule type" value="mRNA"/>
</dbReference>
<dbReference type="CCDS" id="CCDS2533.1"/>
<dbReference type="RefSeq" id="NP_683764.1">
    <property type="nucleotide sequence ID" value="NM_148961.4"/>
</dbReference>
<dbReference type="RefSeq" id="XP_016858899.1">
    <property type="nucleotide sequence ID" value="XM_017003410.2"/>
</dbReference>
<dbReference type="RefSeq" id="XP_054196632.1">
    <property type="nucleotide sequence ID" value="XM_054340657.1"/>
</dbReference>
<dbReference type="BioGRID" id="127314">
    <property type="interactions" value="7"/>
</dbReference>
<dbReference type="FunCoup" id="Q8NHW6">
    <property type="interactions" value="2"/>
</dbReference>
<dbReference type="IntAct" id="Q8NHW6">
    <property type="interactions" value="3"/>
</dbReference>
<dbReference type="STRING" id="9606.ENSP00000375849"/>
<dbReference type="BioMuta" id="OTOS"/>
<dbReference type="PaxDb" id="9606-ENSP00000375849"/>
<dbReference type="PeptideAtlas" id="Q8NHW6"/>
<dbReference type="Antibodypedia" id="47715">
    <property type="antibodies" value="36 antibodies from 11 providers"/>
</dbReference>
<dbReference type="DNASU" id="150677"/>
<dbReference type="Ensembl" id="ENST00000319460.2">
    <property type="protein sequence ID" value="ENSP00000322486.1"/>
    <property type="gene ID" value="ENSG00000178602.8"/>
</dbReference>
<dbReference type="Ensembl" id="ENST00000391989.6">
    <property type="protein sequence ID" value="ENSP00000375849.2"/>
    <property type="gene ID" value="ENSG00000178602.8"/>
</dbReference>
<dbReference type="GeneID" id="150677"/>
<dbReference type="KEGG" id="hsa:150677"/>
<dbReference type="MANE-Select" id="ENST00000319460.2">
    <property type="protein sequence ID" value="ENSP00000322486.1"/>
    <property type="RefSeq nucleotide sequence ID" value="NM_148961.4"/>
    <property type="RefSeq protein sequence ID" value="NP_683764.1"/>
</dbReference>
<dbReference type="UCSC" id="uc002vyv.3">
    <property type="organism name" value="human"/>
</dbReference>
<dbReference type="AGR" id="HGNC:22644"/>
<dbReference type="CTD" id="150677"/>
<dbReference type="GeneCards" id="OTOS"/>
<dbReference type="HGNC" id="HGNC:22644">
    <property type="gene designation" value="OTOS"/>
</dbReference>
<dbReference type="HPA" id="ENSG00000178602">
    <property type="expression patterns" value="Group enriched (pituitary gland, thyroid gland)"/>
</dbReference>
<dbReference type="MIM" id="607877">
    <property type="type" value="gene"/>
</dbReference>
<dbReference type="neXtProt" id="NX_Q8NHW6"/>
<dbReference type="OpenTargets" id="ENSG00000178602"/>
<dbReference type="PharmGKB" id="PA134906408"/>
<dbReference type="VEuPathDB" id="HostDB:ENSG00000178602"/>
<dbReference type="eggNOG" id="ENOG502S3R4">
    <property type="taxonomic scope" value="Eukaryota"/>
</dbReference>
<dbReference type="GeneTree" id="ENSGT00390000011600"/>
<dbReference type="HOGENOM" id="CLU_170470_0_0_1"/>
<dbReference type="InParanoid" id="Q8NHW6"/>
<dbReference type="OMA" id="TSDFWDY"/>
<dbReference type="OrthoDB" id="8858469at2759"/>
<dbReference type="PAN-GO" id="Q8NHW6">
    <property type="GO annotations" value="1 GO annotation based on evolutionary models"/>
</dbReference>
<dbReference type="PhylomeDB" id="Q8NHW6"/>
<dbReference type="TreeFam" id="TF336889"/>
<dbReference type="PathwayCommons" id="Q8NHW6"/>
<dbReference type="SignaLink" id="Q8NHW6"/>
<dbReference type="BioGRID-ORCS" id="150677">
    <property type="hits" value="14 hits in 1131 CRISPR screens"/>
</dbReference>
<dbReference type="GenomeRNAi" id="150677"/>
<dbReference type="Pharos" id="Q8NHW6">
    <property type="development level" value="Tdark"/>
</dbReference>
<dbReference type="PRO" id="PR:Q8NHW6"/>
<dbReference type="Proteomes" id="UP000005640">
    <property type="component" value="Chromosome 2"/>
</dbReference>
<dbReference type="RNAct" id="Q8NHW6">
    <property type="molecule type" value="protein"/>
</dbReference>
<dbReference type="Bgee" id="ENSG00000178602">
    <property type="expression patterns" value="Expressed in pituitary gland and 51 other cell types or tissues"/>
</dbReference>
<dbReference type="GO" id="GO:0005576">
    <property type="term" value="C:extracellular region"/>
    <property type="evidence" value="ECO:0007669"/>
    <property type="project" value="UniProtKB-SubCell"/>
</dbReference>
<dbReference type="GO" id="GO:0007605">
    <property type="term" value="P:sensory perception of sound"/>
    <property type="evidence" value="ECO:0000318"/>
    <property type="project" value="GO_Central"/>
</dbReference>
<dbReference type="InterPro" id="IPR028224">
    <property type="entry name" value="Otospiralin"/>
</dbReference>
<dbReference type="PANTHER" id="PTHR35073">
    <property type="entry name" value="OTOSPIRALIN"/>
    <property type="match status" value="1"/>
</dbReference>
<dbReference type="PANTHER" id="PTHR35073:SF1">
    <property type="entry name" value="OTOSPIRALIN"/>
    <property type="match status" value="1"/>
</dbReference>
<dbReference type="Pfam" id="PF15182">
    <property type="entry name" value="OTOS"/>
    <property type="match status" value="1"/>
</dbReference>
<sequence>MQACMVPGLALCLLLGPLAGAKPVQEEGDPYAELPAMPYWPFSTSDFWNYVQHFQALGAYPQIEDMARTFFAHFPLGSTLGFHVPYQED</sequence>
<proteinExistence type="evidence at protein level"/>
<protein>
    <recommendedName>
        <fullName>Otospiralin</fullName>
    </recommendedName>
</protein>
<organism>
    <name type="scientific">Homo sapiens</name>
    <name type="common">Human</name>
    <dbReference type="NCBI Taxonomy" id="9606"/>
    <lineage>
        <taxon>Eukaryota</taxon>
        <taxon>Metazoa</taxon>
        <taxon>Chordata</taxon>
        <taxon>Craniata</taxon>
        <taxon>Vertebrata</taxon>
        <taxon>Euteleostomi</taxon>
        <taxon>Mammalia</taxon>
        <taxon>Eutheria</taxon>
        <taxon>Euarchontoglires</taxon>
        <taxon>Primates</taxon>
        <taxon>Haplorrhini</taxon>
        <taxon>Catarrhini</taxon>
        <taxon>Hominidae</taxon>
        <taxon>Homo</taxon>
    </lineage>
</organism>
<reference key="1">
    <citation type="journal article" date="2002" name="J. Neurosci.">
        <title>Down regulation of otospiralin, a novel inner ear protein, causes hair cell degeneration and deafness.</title>
        <authorList>
            <person name="Delprat B."/>
            <person name="Boulanger A.M."/>
            <person name="Wang J."/>
            <person name="Beaudoin V."/>
            <person name="Guitton M.J."/>
            <person name="Venteo S."/>
            <person name="Dechesne C.J."/>
            <person name="Pujol R."/>
            <person name="Lavigne-Rebillard M."/>
            <person name="Puel J.-L."/>
            <person name="Hamel C.P."/>
        </authorList>
    </citation>
    <scope>NUCLEOTIDE SEQUENCE [GENOMIC DNA]</scope>
</reference>
<reference key="2">
    <citation type="journal article" date="2003" name="Neurogenetics">
        <title>Gene structure, chromosomal localization, and mutation screening of the human gene for the inner ear protein otospiralin.</title>
        <authorList>
            <person name="Lavigne-Rebillard M."/>
            <person name="Delprat B."/>
            <person name="Surget M.-O."/>
            <person name="Griffoin J.-M."/>
            <person name="Weil D."/>
            <person name="Arbones M."/>
            <person name="Vincent R."/>
            <person name="Hamel C.P."/>
        </authorList>
    </citation>
    <scope>NUCLEOTIDE SEQUENCE [GENOMIC DNA]</scope>
    <scope>VARIANT LEU-7</scope>
</reference>
<reference key="3">
    <citation type="journal article" date="2005" name="Nature">
        <title>Generation and annotation of the DNA sequences of human chromosomes 2 and 4.</title>
        <authorList>
            <person name="Hillier L.W."/>
            <person name="Graves T.A."/>
            <person name="Fulton R.S."/>
            <person name="Fulton L.A."/>
            <person name="Pepin K.H."/>
            <person name="Minx P."/>
            <person name="Wagner-McPherson C."/>
            <person name="Layman D."/>
            <person name="Wylie K."/>
            <person name="Sekhon M."/>
            <person name="Becker M.C."/>
            <person name="Fewell G.A."/>
            <person name="Delehaunty K.D."/>
            <person name="Miner T.L."/>
            <person name="Nash W.E."/>
            <person name="Kremitzki C."/>
            <person name="Oddy L."/>
            <person name="Du H."/>
            <person name="Sun H."/>
            <person name="Bradshaw-Cordum H."/>
            <person name="Ali J."/>
            <person name="Carter J."/>
            <person name="Cordes M."/>
            <person name="Harris A."/>
            <person name="Isak A."/>
            <person name="van Brunt A."/>
            <person name="Nguyen C."/>
            <person name="Du F."/>
            <person name="Courtney L."/>
            <person name="Kalicki J."/>
            <person name="Ozersky P."/>
            <person name="Abbott S."/>
            <person name="Armstrong J."/>
            <person name="Belter E.A."/>
            <person name="Caruso L."/>
            <person name="Cedroni M."/>
            <person name="Cotton M."/>
            <person name="Davidson T."/>
            <person name="Desai A."/>
            <person name="Elliott G."/>
            <person name="Erb T."/>
            <person name="Fronick C."/>
            <person name="Gaige T."/>
            <person name="Haakenson W."/>
            <person name="Haglund K."/>
            <person name="Holmes A."/>
            <person name="Harkins R."/>
            <person name="Kim K."/>
            <person name="Kruchowski S.S."/>
            <person name="Strong C.M."/>
            <person name="Grewal N."/>
            <person name="Goyea E."/>
            <person name="Hou S."/>
            <person name="Levy A."/>
            <person name="Martinka S."/>
            <person name="Mead K."/>
            <person name="McLellan M.D."/>
            <person name="Meyer R."/>
            <person name="Randall-Maher J."/>
            <person name="Tomlinson C."/>
            <person name="Dauphin-Kohlberg S."/>
            <person name="Kozlowicz-Reilly A."/>
            <person name="Shah N."/>
            <person name="Swearengen-Shahid S."/>
            <person name="Snider J."/>
            <person name="Strong J.T."/>
            <person name="Thompson J."/>
            <person name="Yoakum M."/>
            <person name="Leonard S."/>
            <person name="Pearman C."/>
            <person name="Trani L."/>
            <person name="Radionenko M."/>
            <person name="Waligorski J.E."/>
            <person name="Wang C."/>
            <person name="Rock S.M."/>
            <person name="Tin-Wollam A.-M."/>
            <person name="Maupin R."/>
            <person name="Latreille P."/>
            <person name="Wendl M.C."/>
            <person name="Yang S.-P."/>
            <person name="Pohl C."/>
            <person name="Wallis J.W."/>
            <person name="Spieth J."/>
            <person name="Bieri T.A."/>
            <person name="Berkowicz N."/>
            <person name="Nelson J.O."/>
            <person name="Osborne J."/>
            <person name="Ding L."/>
            <person name="Meyer R."/>
            <person name="Sabo A."/>
            <person name="Shotland Y."/>
            <person name="Sinha P."/>
            <person name="Wohldmann P.E."/>
            <person name="Cook L.L."/>
            <person name="Hickenbotham M.T."/>
            <person name="Eldred J."/>
            <person name="Williams D."/>
            <person name="Jones T.A."/>
            <person name="She X."/>
            <person name="Ciccarelli F.D."/>
            <person name="Izaurralde E."/>
            <person name="Taylor J."/>
            <person name="Schmutz J."/>
            <person name="Myers R.M."/>
            <person name="Cox D.R."/>
            <person name="Huang X."/>
            <person name="McPherson J.D."/>
            <person name="Mardis E.R."/>
            <person name="Clifton S.W."/>
            <person name="Warren W.C."/>
            <person name="Chinwalla A.T."/>
            <person name="Eddy S.R."/>
            <person name="Marra M.A."/>
            <person name="Ovcharenko I."/>
            <person name="Furey T.S."/>
            <person name="Miller W."/>
            <person name="Eichler E.E."/>
            <person name="Bork P."/>
            <person name="Suyama M."/>
            <person name="Torrents D."/>
            <person name="Waterston R.H."/>
            <person name="Wilson R.K."/>
        </authorList>
    </citation>
    <scope>NUCLEOTIDE SEQUENCE [LARGE SCALE GENOMIC DNA]</scope>
</reference>
<reference key="4">
    <citation type="journal article" date="2004" name="Genome Res.">
        <title>The status, quality, and expansion of the NIH full-length cDNA project: the Mammalian Gene Collection (MGC).</title>
        <authorList>
            <consortium name="The MGC Project Team"/>
        </authorList>
    </citation>
    <scope>NUCLEOTIDE SEQUENCE [LARGE SCALE MRNA]</scope>
    <source>
        <tissue>Brain</tissue>
    </source>
</reference>
<name>OTOSP_HUMAN</name>